<accession>A0LUB9</accession>
<gene>
    <name evidence="1" type="primary">argG</name>
    <name type="ordered locus">Acel_1257</name>
</gene>
<feature type="chain" id="PRO_1000000378" description="Argininosuccinate synthase">
    <location>
        <begin position="1"/>
        <end position="401"/>
    </location>
</feature>
<feature type="binding site" evidence="1">
    <location>
        <begin position="8"/>
        <end position="16"/>
    </location>
    <ligand>
        <name>ATP</name>
        <dbReference type="ChEBI" id="CHEBI:30616"/>
    </ligand>
</feature>
<feature type="binding site" evidence="1">
    <location>
        <position position="86"/>
    </location>
    <ligand>
        <name>L-citrulline</name>
        <dbReference type="ChEBI" id="CHEBI:57743"/>
    </ligand>
</feature>
<feature type="binding site" evidence="1">
    <location>
        <position position="116"/>
    </location>
    <ligand>
        <name>ATP</name>
        <dbReference type="ChEBI" id="CHEBI:30616"/>
    </ligand>
</feature>
<feature type="binding site" evidence="1">
    <location>
        <position position="118"/>
    </location>
    <ligand>
        <name>L-aspartate</name>
        <dbReference type="ChEBI" id="CHEBI:29991"/>
    </ligand>
</feature>
<feature type="binding site" evidence="1">
    <location>
        <position position="122"/>
    </location>
    <ligand>
        <name>L-aspartate</name>
        <dbReference type="ChEBI" id="CHEBI:29991"/>
    </ligand>
</feature>
<feature type="binding site" evidence="1">
    <location>
        <position position="122"/>
    </location>
    <ligand>
        <name>L-citrulline</name>
        <dbReference type="ChEBI" id="CHEBI:57743"/>
    </ligand>
</feature>
<feature type="binding site" evidence="1">
    <location>
        <position position="123"/>
    </location>
    <ligand>
        <name>L-aspartate</name>
        <dbReference type="ChEBI" id="CHEBI:29991"/>
    </ligand>
</feature>
<feature type="binding site" evidence="1">
    <location>
        <position position="126"/>
    </location>
    <ligand>
        <name>L-citrulline</name>
        <dbReference type="ChEBI" id="CHEBI:57743"/>
    </ligand>
</feature>
<feature type="binding site" evidence="1">
    <location>
        <position position="174"/>
    </location>
    <ligand>
        <name>L-citrulline</name>
        <dbReference type="ChEBI" id="CHEBI:57743"/>
    </ligand>
</feature>
<feature type="binding site" evidence="1">
    <location>
        <position position="258"/>
    </location>
    <ligand>
        <name>L-citrulline</name>
        <dbReference type="ChEBI" id="CHEBI:57743"/>
    </ligand>
</feature>
<feature type="binding site" evidence="1">
    <location>
        <position position="270"/>
    </location>
    <ligand>
        <name>L-citrulline</name>
        <dbReference type="ChEBI" id="CHEBI:57743"/>
    </ligand>
</feature>
<comment type="catalytic activity">
    <reaction evidence="1">
        <text>L-citrulline + L-aspartate + ATP = 2-(N(omega)-L-arginino)succinate + AMP + diphosphate + H(+)</text>
        <dbReference type="Rhea" id="RHEA:10932"/>
        <dbReference type="ChEBI" id="CHEBI:15378"/>
        <dbReference type="ChEBI" id="CHEBI:29991"/>
        <dbReference type="ChEBI" id="CHEBI:30616"/>
        <dbReference type="ChEBI" id="CHEBI:33019"/>
        <dbReference type="ChEBI" id="CHEBI:57472"/>
        <dbReference type="ChEBI" id="CHEBI:57743"/>
        <dbReference type="ChEBI" id="CHEBI:456215"/>
        <dbReference type="EC" id="6.3.4.5"/>
    </reaction>
</comment>
<comment type="pathway">
    <text evidence="1">Amino-acid biosynthesis; L-arginine biosynthesis; L-arginine from L-ornithine and carbamoyl phosphate: step 2/3.</text>
</comment>
<comment type="subunit">
    <text evidence="1">Homotetramer.</text>
</comment>
<comment type="subcellular location">
    <subcellularLocation>
        <location evidence="1">Cytoplasm</location>
    </subcellularLocation>
</comment>
<comment type="similarity">
    <text evidence="1">Belongs to the argininosuccinate synthase family. Type 1 subfamily.</text>
</comment>
<keyword id="KW-0028">Amino-acid biosynthesis</keyword>
<keyword id="KW-0055">Arginine biosynthesis</keyword>
<keyword id="KW-0067">ATP-binding</keyword>
<keyword id="KW-0963">Cytoplasm</keyword>
<keyword id="KW-0436">Ligase</keyword>
<keyword id="KW-0547">Nucleotide-binding</keyword>
<keyword id="KW-1185">Reference proteome</keyword>
<organism>
    <name type="scientific">Acidothermus cellulolyticus (strain ATCC 43068 / DSM 8971 / 11B)</name>
    <dbReference type="NCBI Taxonomy" id="351607"/>
    <lineage>
        <taxon>Bacteria</taxon>
        <taxon>Bacillati</taxon>
        <taxon>Actinomycetota</taxon>
        <taxon>Actinomycetes</taxon>
        <taxon>Acidothermales</taxon>
        <taxon>Acidothermaceae</taxon>
        <taxon>Acidothermus</taxon>
    </lineage>
</organism>
<reference key="1">
    <citation type="journal article" date="2009" name="Genome Res.">
        <title>Complete genome of the cellulolytic thermophile Acidothermus cellulolyticus 11B provides insights into its ecophysiological and evolutionary adaptations.</title>
        <authorList>
            <person name="Barabote R.D."/>
            <person name="Xie G."/>
            <person name="Leu D.H."/>
            <person name="Normand P."/>
            <person name="Necsulea A."/>
            <person name="Daubin V."/>
            <person name="Medigue C."/>
            <person name="Adney W.S."/>
            <person name="Xu X.C."/>
            <person name="Lapidus A."/>
            <person name="Parales R.E."/>
            <person name="Detter C."/>
            <person name="Pujic P."/>
            <person name="Bruce D."/>
            <person name="Lavire C."/>
            <person name="Challacombe J.F."/>
            <person name="Brettin T.S."/>
            <person name="Berry A.M."/>
        </authorList>
    </citation>
    <scope>NUCLEOTIDE SEQUENCE [LARGE SCALE GENOMIC DNA]</scope>
    <source>
        <strain>ATCC 43068 / DSM 8971 / 11B</strain>
    </source>
</reference>
<dbReference type="EC" id="6.3.4.5" evidence="1"/>
<dbReference type="EMBL" id="CP000481">
    <property type="protein sequence ID" value="ABK53029.1"/>
    <property type="molecule type" value="Genomic_DNA"/>
</dbReference>
<dbReference type="RefSeq" id="WP_011720092.1">
    <property type="nucleotide sequence ID" value="NC_008578.1"/>
</dbReference>
<dbReference type="SMR" id="A0LUB9"/>
<dbReference type="FunCoup" id="A0LUB9">
    <property type="interactions" value="294"/>
</dbReference>
<dbReference type="STRING" id="351607.Acel_1257"/>
<dbReference type="KEGG" id="ace:Acel_1257"/>
<dbReference type="eggNOG" id="COG0137">
    <property type="taxonomic scope" value="Bacteria"/>
</dbReference>
<dbReference type="HOGENOM" id="CLU_032784_4_2_11"/>
<dbReference type="InParanoid" id="A0LUB9"/>
<dbReference type="OrthoDB" id="9801641at2"/>
<dbReference type="UniPathway" id="UPA00068">
    <property type="reaction ID" value="UER00113"/>
</dbReference>
<dbReference type="Proteomes" id="UP000008221">
    <property type="component" value="Chromosome"/>
</dbReference>
<dbReference type="GO" id="GO:0005737">
    <property type="term" value="C:cytoplasm"/>
    <property type="evidence" value="ECO:0007669"/>
    <property type="project" value="UniProtKB-SubCell"/>
</dbReference>
<dbReference type="GO" id="GO:0004055">
    <property type="term" value="F:argininosuccinate synthase activity"/>
    <property type="evidence" value="ECO:0007669"/>
    <property type="project" value="UniProtKB-UniRule"/>
</dbReference>
<dbReference type="GO" id="GO:0005524">
    <property type="term" value="F:ATP binding"/>
    <property type="evidence" value="ECO:0007669"/>
    <property type="project" value="UniProtKB-UniRule"/>
</dbReference>
<dbReference type="GO" id="GO:0000053">
    <property type="term" value="P:argininosuccinate metabolic process"/>
    <property type="evidence" value="ECO:0007669"/>
    <property type="project" value="TreeGrafter"/>
</dbReference>
<dbReference type="GO" id="GO:0006526">
    <property type="term" value="P:L-arginine biosynthetic process"/>
    <property type="evidence" value="ECO:0007669"/>
    <property type="project" value="UniProtKB-UniRule"/>
</dbReference>
<dbReference type="GO" id="GO:0000050">
    <property type="term" value="P:urea cycle"/>
    <property type="evidence" value="ECO:0007669"/>
    <property type="project" value="TreeGrafter"/>
</dbReference>
<dbReference type="CDD" id="cd01999">
    <property type="entry name" value="ASS"/>
    <property type="match status" value="1"/>
</dbReference>
<dbReference type="FunFam" id="3.40.50.620:FF:000038">
    <property type="entry name" value="Argininosuccinate synthase"/>
    <property type="match status" value="1"/>
</dbReference>
<dbReference type="FunFam" id="3.90.1260.10:FF:000007">
    <property type="entry name" value="Argininosuccinate synthase"/>
    <property type="match status" value="1"/>
</dbReference>
<dbReference type="Gene3D" id="3.90.1260.10">
    <property type="entry name" value="Argininosuccinate synthetase, chain A, domain 2"/>
    <property type="match status" value="1"/>
</dbReference>
<dbReference type="Gene3D" id="3.40.50.620">
    <property type="entry name" value="HUPs"/>
    <property type="match status" value="1"/>
</dbReference>
<dbReference type="Gene3D" id="1.20.5.470">
    <property type="entry name" value="Single helix bin"/>
    <property type="match status" value="1"/>
</dbReference>
<dbReference type="HAMAP" id="MF_00005">
    <property type="entry name" value="Arg_succ_synth_type1"/>
    <property type="match status" value="1"/>
</dbReference>
<dbReference type="InterPro" id="IPR048268">
    <property type="entry name" value="Arginosuc_syn_C"/>
</dbReference>
<dbReference type="InterPro" id="IPR048267">
    <property type="entry name" value="Arginosuc_syn_N"/>
</dbReference>
<dbReference type="InterPro" id="IPR001518">
    <property type="entry name" value="Arginosuc_synth"/>
</dbReference>
<dbReference type="InterPro" id="IPR018223">
    <property type="entry name" value="Arginosuc_synth_CS"/>
</dbReference>
<dbReference type="InterPro" id="IPR023434">
    <property type="entry name" value="Arginosuc_synth_type_1_subfam"/>
</dbReference>
<dbReference type="InterPro" id="IPR024074">
    <property type="entry name" value="AS_cat/multimer_dom_body"/>
</dbReference>
<dbReference type="InterPro" id="IPR014729">
    <property type="entry name" value="Rossmann-like_a/b/a_fold"/>
</dbReference>
<dbReference type="NCBIfam" id="TIGR00032">
    <property type="entry name" value="argG"/>
    <property type="match status" value="1"/>
</dbReference>
<dbReference type="NCBIfam" id="NF001770">
    <property type="entry name" value="PRK00509.1"/>
    <property type="match status" value="1"/>
</dbReference>
<dbReference type="PANTHER" id="PTHR11587">
    <property type="entry name" value="ARGININOSUCCINATE SYNTHASE"/>
    <property type="match status" value="1"/>
</dbReference>
<dbReference type="PANTHER" id="PTHR11587:SF2">
    <property type="entry name" value="ARGININOSUCCINATE SYNTHASE"/>
    <property type="match status" value="1"/>
</dbReference>
<dbReference type="Pfam" id="PF20979">
    <property type="entry name" value="Arginosuc_syn_C"/>
    <property type="match status" value="1"/>
</dbReference>
<dbReference type="Pfam" id="PF00764">
    <property type="entry name" value="Arginosuc_synth"/>
    <property type="match status" value="1"/>
</dbReference>
<dbReference type="SUPFAM" id="SSF52402">
    <property type="entry name" value="Adenine nucleotide alpha hydrolases-like"/>
    <property type="match status" value="1"/>
</dbReference>
<dbReference type="SUPFAM" id="SSF69864">
    <property type="entry name" value="Argininosuccinate synthetase, C-terminal domain"/>
    <property type="match status" value="1"/>
</dbReference>
<dbReference type="PROSITE" id="PS00564">
    <property type="entry name" value="ARGININOSUCCIN_SYN_1"/>
    <property type="match status" value="1"/>
</dbReference>
<dbReference type="PROSITE" id="PS00565">
    <property type="entry name" value="ARGININOSUCCIN_SYN_2"/>
    <property type="match status" value="1"/>
</dbReference>
<protein>
    <recommendedName>
        <fullName evidence="1">Argininosuccinate synthase</fullName>
        <ecNumber evidence="1">6.3.4.5</ecNumber>
    </recommendedName>
    <alternativeName>
        <fullName evidence="1">Citrulline--aspartate ligase</fullName>
    </alternativeName>
</protein>
<evidence type="ECO:0000255" key="1">
    <source>
        <dbReference type="HAMAP-Rule" id="MF_00005"/>
    </source>
</evidence>
<proteinExistence type="inferred from homology"/>
<sequence length="401" mass="43539">MTERVVLAYSGGLDTSVCIGWITEQTGAEVIAVAVDVGQGEDMEVIRKRALACGAVEAEVIDARAEFAADYCVPALRANALYMGRYPLISALSRPLIDKHLVAAAHRHKATAVAHGSTGKGNDQVRFEVGIGSLDPELRILAPVRDSGMTRDRAIAFAEAKGLPIEVTKKSPYSIDANLWGRAIETGFLEDIWNAPIEEIYAYTADPAVPRPADEVVVSFSDGVPVAIDGRPVSPLEAITELNRRAGAQGVGRIDLVEDRLVGIKSREVYEAPGAVALITAHQELENVTVERDLARFKRLVDQRWAELVYDGLWFSPLKRALDAFIDTAQRHVTGDIRLVLHGGRAVVTGRRSPQALYDYRLATYDTGDLFDQSLAKGFVELWGLPSRTAARRDLAAGAGE</sequence>
<name>ASSY_ACIC1</name>